<comment type="function">
    <text>Implicated in endonuclease cleavage of capped RNA primers. Displays an elongation factor activity in viral RNA synthesis. Dispensable for viral transcription, but not replication.</text>
</comment>
<comment type="subunit">
    <text>Influenza RNA polymerase is composed of three subunits: PB1, PB2 and PA.</text>
</comment>
<comment type="PTM">
    <text evidence="1">Phosphorylated on serines and threonines by host kinases, including human casein kinase II.</text>
</comment>
<comment type="similarity">
    <text evidence="2">Belongs to the influenza viruses PA family.</text>
</comment>
<gene>
    <name type="primary">PA</name>
</gene>
<sequence>TDSSWIELDEIGEDVAPIEHIASMRRNYFTSEVSHCRATEYIMKGVYINTALLNASCAAMDDFQLIPMISKCRTK</sequence>
<keyword id="KW-0597">Phosphoprotein</keyword>
<accession>P26145</accession>
<reference key="1">
    <citation type="journal article" date="1993" name="Virology">
        <title>A reassortant H1N1 influenza A virus caused fatal epizootics among camels in Mongolia.</title>
        <authorList>
            <person name="Yamnikova S.S."/>
            <person name="Mandler J."/>
            <person name="Bekh-Ochir Z.H."/>
            <person name="Dachtzeren P."/>
            <person name="Ludwig S."/>
            <person name="Lvov D.K."/>
            <person name="Scholtissek C."/>
        </authorList>
    </citation>
    <scope>NUCLEOTIDE SEQUENCE [MRNA]</scope>
</reference>
<organism>
    <name type="scientific">Influenza A virus (strain A/Camel/Mongolia/1982 H1N1)</name>
    <dbReference type="NCBI Taxonomy" id="387191"/>
    <lineage>
        <taxon>Viruses</taxon>
        <taxon>Riboviria</taxon>
        <taxon>Orthornavirae</taxon>
        <taxon>Negarnaviricota</taxon>
        <taxon>Polyploviricotina</taxon>
        <taxon>Insthoviricetes</taxon>
        <taxon>Articulavirales</taxon>
        <taxon>Orthomyxoviridae</taxon>
        <taxon>Alphainfluenzavirus</taxon>
        <taxon>Alphainfluenzavirus influenzae</taxon>
        <taxon>Influenza A virus</taxon>
    </lineage>
</organism>
<dbReference type="EMBL" id="M73974">
    <property type="protein sequence ID" value="AAA16909.1"/>
    <property type="molecule type" value="mRNA"/>
</dbReference>
<dbReference type="SMR" id="P26145"/>
<dbReference type="MEROPS" id="S62.001"/>
<dbReference type="GO" id="GO:0003723">
    <property type="term" value="F:RNA binding"/>
    <property type="evidence" value="ECO:0007669"/>
    <property type="project" value="InterPro"/>
</dbReference>
<dbReference type="GO" id="GO:0039694">
    <property type="term" value="P:viral RNA genome replication"/>
    <property type="evidence" value="ECO:0007669"/>
    <property type="project" value="InterPro"/>
</dbReference>
<dbReference type="InterPro" id="IPR001009">
    <property type="entry name" value="PA/PA-X"/>
</dbReference>
<dbReference type="Pfam" id="PF00603">
    <property type="entry name" value="Flu_PA"/>
    <property type="match status" value="1"/>
</dbReference>
<protein>
    <recommendedName>
        <fullName>Polymerase acidic protein</fullName>
    </recommendedName>
    <alternativeName>
        <fullName>RNA-directed RNA polymerase subunit P2</fullName>
    </alternativeName>
</protein>
<proteinExistence type="evidence at transcript level"/>
<feature type="chain" id="PRO_0000078780" description="Polymerase acidic protein">
    <location>
        <begin position="1" status="less than"/>
        <end position="75" status="greater than"/>
    </location>
</feature>
<feature type="non-terminal residue">
    <location>
        <position position="1"/>
    </location>
</feature>
<feature type="non-terminal residue">
    <location>
        <position position="75"/>
    </location>
</feature>
<organismHost>
    <name type="scientific">Aves</name>
    <dbReference type="NCBI Taxonomy" id="8782"/>
</organismHost>
<organismHost>
    <name type="scientific">Homo sapiens</name>
    <name type="common">Human</name>
    <dbReference type="NCBI Taxonomy" id="9606"/>
</organismHost>
<organismHost>
    <name type="scientific">Sus scrofa</name>
    <name type="common">Pig</name>
    <dbReference type="NCBI Taxonomy" id="9823"/>
</organismHost>
<evidence type="ECO:0000250" key="1"/>
<evidence type="ECO:0000305" key="2"/>
<name>PA_I82A2</name>